<organism>
    <name type="scientific">Streptococcus pyogenes serotype M3 (strain SSI-1)</name>
    <dbReference type="NCBI Taxonomy" id="193567"/>
    <lineage>
        <taxon>Bacteria</taxon>
        <taxon>Bacillati</taxon>
        <taxon>Bacillota</taxon>
        <taxon>Bacilli</taxon>
        <taxon>Lactobacillales</taxon>
        <taxon>Streptococcaceae</taxon>
        <taxon>Streptococcus</taxon>
    </lineage>
</organism>
<evidence type="ECO:0000255" key="1">
    <source>
        <dbReference type="HAMAP-Rule" id="MF_00473"/>
    </source>
</evidence>
<feature type="chain" id="PRO_0000411350" description="Glucose-6-phosphate isomerase">
    <location>
        <begin position="1"/>
        <end position="449"/>
    </location>
</feature>
<feature type="active site" description="Proton donor" evidence="1">
    <location>
        <position position="291"/>
    </location>
</feature>
<feature type="active site" evidence="1">
    <location>
        <position position="312"/>
    </location>
</feature>
<feature type="active site" evidence="1">
    <location>
        <position position="426"/>
    </location>
</feature>
<dbReference type="EC" id="5.3.1.9" evidence="1"/>
<dbReference type="EMBL" id="BA000034">
    <property type="protein sequence ID" value="BAC63257.1"/>
    <property type="molecule type" value="Genomic_DNA"/>
</dbReference>
<dbReference type="RefSeq" id="WP_011054153.1">
    <property type="nucleotide sequence ID" value="NC_004606.1"/>
</dbReference>
<dbReference type="SMR" id="P0DB25"/>
<dbReference type="KEGG" id="sps:SPs0162"/>
<dbReference type="HOGENOM" id="CLU_037303_0_1_9"/>
<dbReference type="UniPathway" id="UPA00109">
    <property type="reaction ID" value="UER00181"/>
</dbReference>
<dbReference type="UniPathway" id="UPA00138"/>
<dbReference type="GO" id="GO:0005829">
    <property type="term" value="C:cytosol"/>
    <property type="evidence" value="ECO:0007669"/>
    <property type="project" value="TreeGrafter"/>
</dbReference>
<dbReference type="GO" id="GO:0097367">
    <property type="term" value="F:carbohydrate derivative binding"/>
    <property type="evidence" value="ECO:0007669"/>
    <property type="project" value="InterPro"/>
</dbReference>
<dbReference type="GO" id="GO:0004347">
    <property type="term" value="F:glucose-6-phosphate isomerase activity"/>
    <property type="evidence" value="ECO:0007669"/>
    <property type="project" value="UniProtKB-UniRule"/>
</dbReference>
<dbReference type="GO" id="GO:0048029">
    <property type="term" value="F:monosaccharide binding"/>
    <property type="evidence" value="ECO:0007669"/>
    <property type="project" value="TreeGrafter"/>
</dbReference>
<dbReference type="GO" id="GO:0006094">
    <property type="term" value="P:gluconeogenesis"/>
    <property type="evidence" value="ECO:0007669"/>
    <property type="project" value="UniProtKB-UniRule"/>
</dbReference>
<dbReference type="GO" id="GO:0051156">
    <property type="term" value="P:glucose 6-phosphate metabolic process"/>
    <property type="evidence" value="ECO:0007669"/>
    <property type="project" value="TreeGrafter"/>
</dbReference>
<dbReference type="GO" id="GO:0006096">
    <property type="term" value="P:glycolytic process"/>
    <property type="evidence" value="ECO:0007669"/>
    <property type="project" value="UniProtKB-UniRule"/>
</dbReference>
<dbReference type="CDD" id="cd05015">
    <property type="entry name" value="SIS_PGI_1"/>
    <property type="match status" value="1"/>
</dbReference>
<dbReference type="CDD" id="cd05016">
    <property type="entry name" value="SIS_PGI_2"/>
    <property type="match status" value="1"/>
</dbReference>
<dbReference type="FunFam" id="3.40.50.10490:FF:000015">
    <property type="entry name" value="Glucose-6-phosphate isomerase"/>
    <property type="match status" value="1"/>
</dbReference>
<dbReference type="FunFam" id="3.40.50.10490:FF:000016">
    <property type="entry name" value="Glucose-6-phosphate isomerase"/>
    <property type="match status" value="1"/>
</dbReference>
<dbReference type="Gene3D" id="3.40.50.10490">
    <property type="entry name" value="Glucose-6-phosphate isomerase like protein, domain 1"/>
    <property type="match status" value="2"/>
</dbReference>
<dbReference type="HAMAP" id="MF_00473">
    <property type="entry name" value="G6P_isomerase"/>
    <property type="match status" value="1"/>
</dbReference>
<dbReference type="InterPro" id="IPR001672">
    <property type="entry name" value="G6P_Isomerase"/>
</dbReference>
<dbReference type="InterPro" id="IPR018189">
    <property type="entry name" value="Phosphoglucose_isomerase_CS"/>
</dbReference>
<dbReference type="InterPro" id="IPR046348">
    <property type="entry name" value="SIS_dom_sf"/>
</dbReference>
<dbReference type="InterPro" id="IPR035476">
    <property type="entry name" value="SIS_PGI_1"/>
</dbReference>
<dbReference type="InterPro" id="IPR035482">
    <property type="entry name" value="SIS_PGI_2"/>
</dbReference>
<dbReference type="NCBIfam" id="NF010697">
    <property type="entry name" value="PRK14097.1"/>
    <property type="match status" value="1"/>
</dbReference>
<dbReference type="PANTHER" id="PTHR11469">
    <property type="entry name" value="GLUCOSE-6-PHOSPHATE ISOMERASE"/>
    <property type="match status" value="1"/>
</dbReference>
<dbReference type="PANTHER" id="PTHR11469:SF1">
    <property type="entry name" value="GLUCOSE-6-PHOSPHATE ISOMERASE"/>
    <property type="match status" value="1"/>
</dbReference>
<dbReference type="Pfam" id="PF00342">
    <property type="entry name" value="PGI"/>
    <property type="match status" value="1"/>
</dbReference>
<dbReference type="PRINTS" id="PR00662">
    <property type="entry name" value="G6PISOMERASE"/>
</dbReference>
<dbReference type="SUPFAM" id="SSF53697">
    <property type="entry name" value="SIS domain"/>
    <property type="match status" value="1"/>
</dbReference>
<dbReference type="PROSITE" id="PS00765">
    <property type="entry name" value="P_GLUCOSE_ISOMERASE_1"/>
    <property type="match status" value="1"/>
</dbReference>
<dbReference type="PROSITE" id="PS00174">
    <property type="entry name" value="P_GLUCOSE_ISOMERASE_2"/>
    <property type="match status" value="1"/>
</dbReference>
<dbReference type="PROSITE" id="PS51463">
    <property type="entry name" value="P_GLUCOSE_ISOMERASE_3"/>
    <property type="match status" value="1"/>
</dbReference>
<comment type="function">
    <text evidence="1">Catalyzes the reversible isomerization of glucose-6-phosphate to fructose-6-phosphate.</text>
</comment>
<comment type="catalytic activity">
    <reaction evidence="1">
        <text>alpha-D-glucose 6-phosphate = beta-D-fructose 6-phosphate</text>
        <dbReference type="Rhea" id="RHEA:11816"/>
        <dbReference type="ChEBI" id="CHEBI:57634"/>
        <dbReference type="ChEBI" id="CHEBI:58225"/>
        <dbReference type="EC" id="5.3.1.9"/>
    </reaction>
</comment>
<comment type="pathway">
    <text evidence="1">Carbohydrate biosynthesis; gluconeogenesis.</text>
</comment>
<comment type="pathway">
    <text evidence="1">Carbohydrate degradation; glycolysis; D-glyceraldehyde 3-phosphate and glycerone phosphate from D-glucose: step 2/4.</text>
</comment>
<comment type="subcellular location">
    <subcellularLocation>
        <location evidence="1">Cytoplasm</location>
    </subcellularLocation>
</comment>
<comment type="similarity">
    <text evidence="1">Belongs to the GPI family.</text>
</comment>
<accession>P0DB25</accession>
<accession>Q8K8Q6</accession>
<proteinExistence type="inferred from homology"/>
<name>G6PI_STRPQ</name>
<keyword id="KW-0963">Cytoplasm</keyword>
<keyword id="KW-0312">Gluconeogenesis</keyword>
<keyword id="KW-0324">Glycolysis</keyword>
<keyword id="KW-0413">Isomerase</keyword>
<reference key="1">
    <citation type="journal article" date="2003" name="Genome Res.">
        <title>Genome sequence of an M3 strain of Streptococcus pyogenes reveals a large-scale genomic rearrangement in invasive strains and new insights into phage evolution.</title>
        <authorList>
            <person name="Nakagawa I."/>
            <person name="Kurokawa K."/>
            <person name="Yamashita A."/>
            <person name="Nakata M."/>
            <person name="Tomiyasu Y."/>
            <person name="Okahashi N."/>
            <person name="Kawabata S."/>
            <person name="Yamazaki K."/>
            <person name="Shiba T."/>
            <person name="Yasunaga T."/>
            <person name="Hayashi H."/>
            <person name="Hattori M."/>
            <person name="Hamada S."/>
        </authorList>
    </citation>
    <scope>NUCLEOTIDE SEQUENCE [LARGE SCALE GENOMIC DNA]</scope>
    <source>
        <strain>SSI-1</strain>
    </source>
</reference>
<protein>
    <recommendedName>
        <fullName evidence="1">Glucose-6-phosphate isomerase</fullName>
        <shortName evidence="1">GPI</shortName>
        <ecNumber evidence="1">5.3.1.9</ecNumber>
    </recommendedName>
    <alternativeName>
        <fullName evidence="1">Phosphoglucose isomerase</fullName>
        <shortName evidence="1">PGI</shortName>
    </alternativeName>
    <alternativeName>
        <fullName evidence="1">Phosphohexose isomerase</fullName>
        <shortName evidence="1">PHI</shortName>
    </alternativeName>
</protein>
<sequence length="449" mass="49471">MSHITFDYSKVLESFAGQHEIDFLQGQVTEADKLLREGTGPGSDFLGWLDLPENYDEEEFARILTAAEKIKSDSEVLVVIGIGGSYLGAKAAIDFLNHHFANLQTAKERKAPQILYAGNSISSTYLADLVEYVQDKEFSVNVISKSGTTTEPAIAFRVFKELLVKKYGQEEASKRIYATTDKVKGAVKVEADANNWETFVVPDNVGGRFSVLTAVGLLPIAASGADITALMEGANAARKDLSSDKISENIAYQYAAVRNLLYRKGYITEILANYEPSLQYFGEWWKQLAGESEGKDQKGIYPTSANFSTDLHSLGQFIQEGYRNLFETVIRVDNPRKNVIIPELAEDLDGLGYLQGKDVDFVNKKATDGVLLAHTDGGVPNMFVTLPAQDEFTLGYTIYFFELAIAVSGYMNAVNPFDQPGVEAYKRNMFALLGKPGFEALSAELNARL</sequence>
<gene>
    <name evidence="1" type="primary">pgi</name>
    <name type="ordered locus">SPs0162</name>
</gene>